<evidence type="ECO:0000250" key="1"/>
<evidence type="ECO:0000255" key="2"/>
<evidence type="ECO:0000305" key="3"/>
<dbReference type="EC" id="1.8.1.8"/>
<dbReference type="EMBL" id="AE004439">
    <property type="protein sequence ID" value="AAK02305.1"/>
    <property type="status" value="ALT_INIT"/>
    <property type="molecule type" value="Genomic_DNA"/>
</dbReference>
<dbReference type="RefSeq" id="WP_032854254.1">
    <property type="nucleotide sequence ID" value="NC_002663.1"/>
</dbReference>
<dbReference type="SMR" id="Q9CP40"/>
<dbReference type="STRING" id="272843.PM0221"/>
<dbReference type="EnsemblBacteria" id="AAK02305">
    <property type="protein sequence ID" value="AAK02305"/>
    <property type="gene ID" value="PM0221"/>
</dbReference>
<dbReference type="KEGG" id="pmu:PM0221"/>
<dbReference type="PATRIC" id="fig|272843.6.peg.229"/>
<dbReference type="HOGENOM" id="CLU_014657_3_0_6"/>
<dbReference type="Proteomes" id="UP000000809">
    <property type="component" value="Chromosome"/>
</dbReference>
<dbReference type="GO" id="GO:0005886">
    <property type="term" value="C:plasma membrane"/>
    <property type="evidence" value="ECO:0007669"/>
    <property type="project" value="UniProtKB-SubCell"/>
</dbReference>
<dbReference type="GO" id="GO:0009055">
    <property type="term" value="F:electron transfer activity"/>
    <property type="evidence" value="ECO:0007669"/>
    <property type="project" value="UniProtKB-UniRule"/>
</dbReference>
<dbReference type="GO" id="GO:0047134">
    <property type="term" value="F:protein-disulfide reductase [NAD(P)H] activity"/>
    <property type="evidence" value="ECO:0007669"/>
    <property type="project" value="UniProtKB-UniRule"/>
</dbReference>
<dbReference type="GO" id="GO:0045454">
    <property type="term" value="P:cell redox homeostasis"/>
    <property type="evidence" value="ECO:0007669"/>
    <property type="project" value="TreeGrafter"/>
</dbReference>
<dbReference type="GO" id="GO:0017004">
    <property type="term" value="P:cytochrome complex assembly"/>
    <property type="evidence" value="ECO:0007669"/>
    <property type="project" value="UniProtKB-UniRule"/>
</dbReference>
<dbReference type="CDD" id="cd02953">
    <property type="entry name" value="DsbDgamma"/>
    <property type="match status" value="1"/>
</dbReference>
<dbReference type="Gene3D" id="3.40.30.10">
    <property type="entry name" value="Glutaredoxin"/>
    <property type="match status" value="1"/>
</dbReference>
<dbReference type="Gene3D" id="2.60.40.1250">
    <property type="entry name" value="Thiol:disulfide interchange protein DsbD, N-terminal domain"/>
    <property type="match status" value="1"/>
</dbReference>
<dbReference type="HAMAP" id="MF_00399">
    <property type="entry name" value="DbsD"/>
    <property type="match status" value="1"/>
</dbReference>
<dbReference type="InterPro" id="IPR003834">
    <property type="entry name" value="Cyt_c_assmbl_TM_dom"/>
</dbReference>
<dbReference type="InterPro" id="IPR035671">
    <property type="entry name" value="DsbD_gamma"/>
</dbReference>
<dbReference type="InterPro" id="IPR028250">
    <property type="entry name" value="DsbDN"/>
</dbReference>
<dbReference type="InterPro" id="IPR036929">
    <property type="entry name" value="DsbDN_sf"/>
</dbReference>
<dbReference type="InterPro" id="IPR022910">
    <property type="entry name" value="Thiol_diS_interchange_DbsD"/>
</dbReference>
<dbReference type="InterPro" id="IPR036249">
    <property type="entry name" value="Thioredoxin-like_sf"/>
</dbReference>
<dbReference type="InterPro" id="IPR017937">
    <property type="entry name" value="Thioredoxin_CS"/>
</dbReference>
<dbReference type="InterPro" id="IPR013766">
    <property type="entry name" value="Thioredoxin_domain"/>
</dbReference>
<dbReference type="NCBIfam" id="NF001419">
    <property type="entry name" value="PRK00293.1"/>
    <property type="match status" value="1"/>
</dbReference>
<dbReference type="PANTHER" id="PTHR32234">
    <property type="entry name" value="THIOL:DISULFIDE INTERCHANGE PROTEIN DSBD"/>
    <property type="match status" value="1"/>
</dbReference>
<dbReference type="PANTHER" id="PTHR32234:SF0">
    <property type="entry name" value="THIOL:DISULFIDE INTERCHANGE PROTEIN DSBD"/>
    <property type="match status" value="1"/>
</dbReference>
<dbReference type="Pfam" id="PF11412">
    <property type="entry name" value="DsbD_N"/>
    <property type="match status" value="1"/>
</dbReference>
<dbReference type="Pfam" id="PF02683">
    <property type="entry name" value="DsbD_TM"/>
    <property type="match status" value="1"/>
</dbReference>
<dbReference type="Pfam" id="PF00085">
    <property type="entry name" value="Thioredoxin"/>
    <property type="match status" value="1"/>
</dbReference>
<dbReference type="SUPFAM" id="SSF74863">
    <property type="entry name" value="Thiol:disulfide interchange protein DsbD, N-terminal domain (DsbD-alpha)"/>
    <property type="match status" value="1"/>
</dbReference>
<dbReference type="SUPFAM" id="SSF52833">
    <property type="entry name" value="Thioredoxin-like"/>
    <property type="match status" value="1"/>
</dbReference>
<dbReference type="PROSITE" id="PS00194">
    <property type="entry name" value="THIOREDOXIN_1"/>
    <property type="match status" value="1"/>
</dbReference>
<dbReference type="PROSITE" id="PS51352">
    <property type="entry name" value="THIOREDOXIN_2"/>
    <property type="match status" value="1"/>
</dbReference>
<comment type="function">
    <text evidence="1">Required to facilitate the formation of correct disulfide bonds in some periplasmic proteins and for the assembly of the periplasmic c-type cytochromes. Acts by transferring electrons from cytoplasmic thioredoxin to the periplasm. This transfer involves a cascade of disulfide bond formation and reduction steps (By similarity).</text>
</comment>
<comment type="catalytic activity">
    <reaction>
        <text>[protein]-dithiol + NAD(+) = [protein]-disulfide + NADH + H(+)</text>
        <dbReference type="Rhea" id="RHEA:18749"/>
        <dbReference type="Rhea" id="RHEA-COMP:10593"/>
        <dbReference type="Rhea" id="RHEA-COMP:10594"/>
        <dbReference type="ChEBI" id="CHEBI:15378"/>
        <dbReference type="ChEBI" id="CHEBI:29950"/>
        <dbReference type="ChEBI" id="CHEBI:50058"/>
        <dbReference type="ChEBI" id="CHEBI:57540"/>
        <dbReference type="ChEBI" id="CHEBI:57945"/>
        <dbReference type="EC" id="1.8.1.8"/>
    </reaction>
</comment>
<comment type="catalytic activity">
    <reaction>
        <text>[protein]-dithiol + NADP(+) = [protein]-disulfide + NADPH + H(+)</text>
        <dbReference type="Rhea" id="RHEA:18753"/>
        <dbReference type="Rhea" id="RHEA-COMP:10593"/>
        <dbReference type="Rhea" id="RHEA-COMP:10594"/>
        <dbReference type="ChEBI" id="CHEBI:15378"/>
        <dbReference type="ChEBI" id="CHEBI:29950"/>
        <dbReference type="ChEBI" id="CHEBI:50058"/>
        <dbReference type="ChEBI" id="CHEBI:57783"/>
        <dbReference type="ChEBI" id="CHEBI:58349"/>
        <dbReference type="EC" id="1.8.1.8"/>
    </reaction>
</comment>
<comment type="subcellular location">
    <subcellularLocation>
        <location evidence="1">Cell inner membrane</location>
        <topology evidence="1">Multi-pass membrane protein</topology>
    </subcellularLocation>
</comment>
<comment type="similarity">
    <text evidence="3">Belongs to the thioredoxin family. DsbD subfamily.</text>
</comment>
<comment type="sequence caution" evidence="3">
    <conflict type="erroneous initiation">
        <sequence resource="EMBL-CDS" id="AAK02305"/>
    </conflict>
</comment>
<accession>Q9CP40</accession>
<protein>
    <recommendedName>
        <fullName>Thiol:disulfide interchange protein DsbD</fullName>
        <ecNumber>1.8.1.8</ecNumber>
    </recommendedName>
    <alternativeName>
        <fullName>Protein-disulfide reductase</fullName>
        <shortName>Disulfide reductase</shortName>
    </alternativeName>
</protein>
<feature type="signal peptide" evidence="2">
    <location>
        <begin position="1"/>
        <end position="19"/>
    </location>
</feature>
<feature type="chain" id="PRO_0000007380" description="Thiol:disulfide interchange protein DsbD">
    <location>
        <begin position="20"/>
        <end position="576"/>
    </location>
</feature>
<feature type="topological domain" description="Periplasmic" evidence="2">
    <location>
        <begin position="20"/>
        <end position="177"/>
    </location>
</feature>
<feature type="transmembrane region" description="Helical" evidence="2">
    <location>
        <begin position="178"/>
        <end position="198"/>
    </location>
</feature>
<feature type="topological domain" description="Cytoplasmic" evidence="2">
    <location>
        <begin position="199"/>
        <end position="229"/>
    </location>
</feature>
<feature type="transmembrane region" description="Helical" evidence="2">
    <location>
        <begin position="230"/>
        <end position="250"/>
    </location>
</feature>
<feature type="topological domain" description="Periplasmic" evidence="2">
    <location>
        <begin position="251"/>
        <end position="253"/>
    </location>
</feature>
<feature type="transmembrane region" description="Helical" evidence="2">
    <location>
        <begin position="254"/>
        <end position="274"/>
    </location>
</feature>
<feature type="topological domain" description="Cytoplasmic" evidence="2">
    <location>
        <begin position="275"/>
        <end position="295"/>
    </location>
</feature>
<feature type="transmembrane region" description="Helical" evidence="2">
    <location>
        <begin position="296"/>
        <end position="316"/>
    </location>
</feature>
<feature type="topological domain" description="Periplasmic" evidence="2">
    <location>
        <begin position="317"/>
        <end position="336"/>
    </location>
</feature>
<feature type="transmembrane region" description="Helical" evidence="2">
    <location>
        <begin position="337"/>
        <end position="357"/>
    </location>
</feature>
<feature type="topological domain" description="Cytoplasmic" evidence="2">
    <location>
        <begin position="358"/>
        <end position="367"/>
    </location>
</feature>
<feature type="transmembrane region" description="Helical" evidence="2">
    <location>
        <begin position="368"/>
        <end position="388"/>
    </location>
</feature>
<feature type="topological domain" description="Periplasmic" evidence="2">
    <location>
        <begin position="389"/>
        <end position="394"/>
    </location>
</feature>
<feature type="transmembrane region" description="Helical" evidence="2">
    <location>
        <begin position="395"/>
        <end position="415"/>
    </location>
</feature>
<feature type="topological domain" description="Cytoplasmic" evidence="2">
    <location>
        <begin position="416"/>
        <end position="419"/>
    </location>
</feature>
<feature type="transmembrane region" description="Helical" evidence="2">
    <location>
        <begin position="420"/>
        <end position="440"/>
    </location>
</feature>
<feature type="topological domain" description="Periplasmic" evidence="2">
    <location>
        <begin position="441"/>
        <end position="576"/>
    </location>
</feature>
<feature type="domain" description="Thioredoxin">
    <location>
        <begin position="433"/>
        <end position="570"/>
    </location>
</feature>
<feature type="disulfide bond" description="Redox-active" evidence="1">
    <location>
        <begin position="120"/>
        <end position="125"/>
    </location>
</feature>
<feature type="disulfide bond" description="Redox-active" evidence="1">
    <location>
        <begin position="193"/>
        <end position="315"/>
    </location>
</feature>
<feature type="disulfide bond" description="Redox-active" evidence="1">
    <location>
        <begin position="485"/>
        <end position="488"/>
    </location>
</feature>
<keyword id="KW-0997">Cell inner membrane</keyword>
<keyword id="KW-1003">Cell membrane</keyword>
<keyword id="KW-0201">Cytochrome c-type biogenesis</keyword>
<keyword id="KW-1015">Disulfide bond</keyword>
<keyword id="KW-0249">Electron transport</keyword>
<keyword id="KW-0472">Membrane</keyword>
<keyword id="KW-0520">NAD</keyword>
<keyword id="KW-0560">Oxidoreductase</keyword>
<keyword id="KW-0676">Redox-active center</keyword>
<keyword id="KW-1185">Reference proteome</keyword>
<keyword id="KW-0732">Signal</keyword>
<keyword id="KW-0812">Transmembrane</keyword>
<keyword id="KW-1133">Transmembrane helix</keyword>
<keyword id="KW-0813">Transport</keyword>
<organism>
    <name type="scientific">Pasteurella multocida (strain Pm70)</name>
    <dbReference type="NCBI Taxonomy" id="272843"/>
    <lineage>
        <taxon>Bacteria</taxon>
        <taxon>Pseudomonadati</taxon>
        <taxon>Pseudomonadota</taxon>
        <taxon>Gammaproteobacteria</taxon>
        <taxon>Pasteurellales</taxon>
        <taxon>Pasteurellaceae</taxon>
        <taxon>Pasteurella</taxon>
    </lineage>
</organism>
<name>DSBD_PASMU</name>
<reference key="1">
    <citation type="journal article" date="2001" name="Proc. Natl. Acad. Sci. U.S.A.">
        <title>Complete genomic sequence of Pasteurella multocida Pm70.</title>
        <authorList>
            <person name="May B.J."/>
            <person name="Zhang Q."/>
            <person name="Li L.L."/>
            <person name="Paustian M.L."/>
            <person name="Whittam T.S."/>
            <person name="Kapur V."/>
        </authorList>
    </citation>
    <scope>NUCLEOTIDE SEQUENCE [LARGE SCALE GENOMIC DNA]</scope>
    <source>
        <strain>Pm70</strain>
    </source>
</reference>
<sequence length="576" mass="64465">MKKIFFIFFLIWTSLSVNAGVFDKKNAFLKAEQAFVFTESQQNDRLSLNWDIASGYYLYKKSLEIKGENGQLFIPQLPLAEIHQDDFFGDVEIYRHQLTFSLPFTQLSATKQVEITYQGCTEGFCYPPETRVIALTSLERESGQISSAVLKEESVLSELPLAEQDRLAAKLIESKYAVFWFFLFGLGLAFTPCVLPMLPLLSAIVIGREQRPSTAKAFGLSVVYVQGMALTYTLLGLIVAAIGLPFQVALQSPYVLLTLSAIFVLLALSMFGLFTLQLPVSLQTKLTQYSQQQKSGVFGGVFVMGMIAGLVASPCTSAPLSGALLYVAQSGDLFTGAITLYLLALGMGLPLIFITVFGNNILPKSGNWMIQVKNAFGFVLLALPIFLISRVFPEIEMPLWFSLAFAFSLWLLYQFRNNKGVWVFTFILGVMGYLYYSYAMNRHTPAHQTTSLSQFERITSYAQLQQVLSKNPNSLAMLDLYADWCVACKEFETHTFSDVAVQKAFTDVLLLQVDMTKNSEANRELMQKLHVIGLPTLIFFNQQGQEIEGSRITGFMQASPFVDWLQKMKSIQPISQ</sequence>
<proteinExistence type="inferred from homology"/>
<gene>
    <name type="primary">dsbD</name>
    <name type="ordered locus">PM0221</name>
</gene>